<name>PURNU_BORBU</name>
<dbReference type="EC" id="2.4.2.1" evidence="2"/>
<dbReference type="EC" id="3.5.4.4" evidence="2"/>
<dbReference type="EC" id="2.4.2.28" evidence="2"/>
<dbReference type="EMBL" id="AE000783">
    <property type="protein sequence ID" value="AAC66827.1"/>
    <property type="molecule type" value="Genomic_DNA"/>
</dbReference>
<dbReference type="PIR" id="B70158">
    <property type="entry name" value="B70158"/>
</dbReference>
<dbReference type="RefSeq" id="NP_212601.1">
    <property type="nucleotide sequence ID" value="NC_001318.1"/>
</dbReference>
<dbReference type="SMR" id="O51423"/>
<dbReference type="STRING" id="224326.BB_0467"/>
<dbReference type="PaxDb" id="224326-BB_0467"/>
<dbReference type="EnsemblBacteria" id="AAC66827">
    <property type="protein sequence ID" value="AAC66827"/>
    <property type="gene ID" value="BB_0467"/>
</dbReference>
<dbReference type="KEGG" id="bbu:BB_0467"/>
<dbReference type="PATRIC" id="fig|224326.49.peg.860"/>
<dbReference type="HOGENOM" id="CLU_065784_0_2_12"/>
<dbReference type="OrthoDB" id="4279at2"/>
<dbReference type="Proteomes" id="UP000001807">
    <property type="component" value="Chromosome"/>
</dbReference>
<dbReference type="GO" id="GO:0004000">
    <property type="term" value="F:adenosine deaminase activity"/>
    <property type="evidence" value="ECO:0007669"/>
    <property type="project" value="RHEA"/>
</dbReference>
<dbReference type="GO" id="GO:0005507">
    <property type="term" value="F:copper ion binding"/>
    <property type="evidence" value="ECO:0007669"/>
    <property type="project" value="TreeGrafter"/>
</dbReference>
<dbReference type="GO" id="GO:0016491">
    <property type="term" value="F:oxidoreductase activity"/>
    <property type="evidence" value="ECO:0007669"/>
    <property type="project" value="UniProtKB-KW"/>
</dbReference>
<dbReference type="GO" id="GO:0017061">
    <property type="term" value="F:S-methyl-5-thioadenosine phosphorylase activity"/>
    <property type="evidence" value="ECO:0007669"/>
    <property type="project" value="UniProtKB-EC"/>
</dbReference>
<dbReference type="CDD" id="cd16833">
    <property type="entry name" value="YfiH"/>
    <property type="match status" value="1"/>
</dbReference>
<dbReference type="Gene3D" id="3.60.140.10">
    <property type="entry name" value="CNF1/YfiH-like putative cysteine hydrolases"/>
    <property type="match status" value="1"/>
</dbReference>
<dbReference type="InterPro" id="IPR003730">
    <property type="entry name" value="Cu_polyphenol_OxRdtase"/>
</dbReference>
<dbReference type="InterPro" id="IPR038371">
    <property type="entry name" value="Cu_polyphenol_OxRdtase_sf"/>
</dbReference>
<dbReference type="InterPro" id="IPR011324">
    <property type="entry name" value="Cytotoxic_necrot_fac-like_cat"/>
</dbReference>
<dbReference type="NCBIfam" id="TIGR00726">
    <property type="entry name" value="peptidoglycan editing factor PgeF"/>
    <property type="match status" value="1"/>
</dbReference>
<dbReference type="PANTHER" id="PTHR30616:SF2">
    <property type="entry name" value="PURINE NUCLEOSIDE PHOSPHORYLASE LACC1"/>
    <property type="match status" value="1"/>
</dbReference>
<dbReference type="PANTHER" id="PTHR30616">
    <property type="entry name" value="UNCHARACTERIZED PROTEIN YFIH"/>
    <property type="match status" value="1"/>
</dbReference>
<dbReference type="Pfam" id="PF02578">
    <property type="entry name" value="Cu-oxidase_4"/>
    <property type="match status" value="1"/>
</dbReference>
<dbReference type="SUPFAM" id="SSF64438">
    <property type="entry name" value="CNF1/YfiH-like putative cysteine hydrolases"/>
    <property type="match status" value="1"/>
</dbReference>
<sequence>MKTIEHELYYEFRIADDVKMIYTKKPFNLKLKELSNDNFNFVPRSKKIKYLKQLHTDIIYKVEDDFINFQEGDGLISSSLDVALVAYFADCLPIYFYDSVKKIIGLIHSGYKGSFNLIILKMLFMFEKMGSALKDLKIVFGPYNRSCCYEVSEIFLKEVSNKFSKDLLNASFVTRDGKIYFDNASFNLNLLSSFNLNIYNSKLCTYCLKNLYSYRRLRESQSYALIWRI</sequence>
<reference key="1">
    <citation type="journal article" date="1997" name="Nature">
        <title>Genomic sequence of a Lyme disease spirochaete, Borrelia burgdorferi.</title>
        <authorList>
            <person name="Fraser C.M."/>
            <person name="Casjens S."/>
            <person name="Huang W.M."/>
            <person name="Sutton G.G."/>
            <person name="Clayton R.A."/>
            <person name="Lathigra R."/>
            <person name="White O."/>
            <person name="Ketchum K.A."/>
            <person name="Dodson R.J."/>
            <person name="Hickey E.K."/>
            <person name="Gwinn M.L."/>
            <person name="Dougherty B.A."/>
            <person name="Tomb J.-F."/>
            <person name="Fleischmann R.D."/>
            <person name="Richardson D.L."/>
            <person name="Peterson J.D."/>
            <person name="Kerlavage A.R."/>
            <person name="Quackenbush J."/>
            <person name="Salzberg S.L."/>
            <person name="Hanson M."/>
            <person name="van Vugt R."/>
            <person name="Palmer N."/>
            <person name="Adams M.D."/>
            <person name="Gocayne J.D."/>
            <person name="Weidman J.F."/>
            <person name="Utterback T.R."/>
            <person name="Watthey L."/>
            <person name="McDonald L.A."/>
            <person name="Artiach P."/>
            <person name="Bowman C."/>
            <person name="Garland S.A."/>
            <person name="Fujii C."/>
            <person name="Cotton M.D."/>
            <person name="Horst K."/>
            <person name="Roberts K.M."/>
            <person name="Hatch B."/>
            <person name="Smith H.O."/>
            <person name="Venter J.C."/>
        </authorList>
    </citation>
    <scope>NUCLEOTIDE SEQUENCE [LARGE SCALE GENOMIC DNA]</scope>
    <source>
        <strain>ATCC 35210 / DSM 4680 / CIP 102532 / B31</strain>
    </source>
</reference>
<evidence type="ECO:0000250" key="1">
    <source>
        <dbReference type="UniProtKB" id="P33644"/>
    </source>
</evidence>
<evidence type="ECO:0000250" key="2">
    <source>
        <dbReference type="UniProtKB" id="P84138"/>
    </source>
</evidence>
<evidence type="ECO:0000250" key="3">
    <source>
        <dbReference type="UniProtKB" id="Q1EIR0"/>
    </source>
</evidence>
<evidence type="ECO:0000305" key="4"/>
<organism>
    <name type="scientific">Borreliella burgdorferi (strain ATCC 35210 / DSM 4680 / CIP 102532 / B31)</name>
    <name type="common">Borrelia burgdorferi</name>
    <dbReference type="NCBI Taxonomy" id="224326"/>
    <lineage>
        <taxon>Bacteria</taxon>
        <taxon>Pseudomonadati</taxon>
        <taxon>Spirochaetota</taxon>
        <taxon>Spirochaetia</taxon>
        <taxon>Spirochaetales</taxon>
        <taxon>Borreliaceae</taxon>
        <taxon>Borreliella</taxon>
    </lineage>
</organism>
<gene>
    <name type="ordered locus">BB_0467</name>
</gene>
<proteinExistence type="inferred from homology"/>
<keyword id="KW-0186">Copper</keyword>
<keyword id="KW-0378">Hydrolase</keyword>
<keyword id="KW-0479">Metal-binding</keyword>
<keyword id="KW-0560">Oxidoreductase</keyword>
<keyword id="KW-1185">Reference proteome</keyword>
<keyword id="KW-0808">Transferase</keyword>
<keyword id="KW-0862">Zinc</keyword>
<comment type="function">
    <text evidence="2">Purine nucleoside enzyme that catalyzes the phosphorolysis of adenosine and inosine nucleosides, yielding D-ribose 1-phosphate and the respective free bases, adenine and hypoxanthine. Also catalyzes the phosphorolysis of S-methyl-5'-thioadenosine into adenine and S-methyl-5-thio-alpha-D-ribose 1-phosphate. Also has adenosine deaminase activity.</text>
</comment>
<comment type="catalytic activity">
    <reaction evidence="2">
        <text>adenosine + phosphate = alpha-D-ribose 1-phosphate + adenine</text>
        <dbReference type="Rhea" id="RHEA:27642"/>
        <dbReference type="ChEBI" id="CHEBI:16335"/>
        <dbReference type="ChEBI" id="CHEBI:16708"/>
        <dbReference type="ChEBI" id="CHEBI:43474"/>
        <dbReference type="ChEBI" id="CHEBI:57720"/>
        <dbReference type="EC" id="2.4.2.1"/>
    </reaction>
    <physiologicalReaction direction="left-to-right" evidence="2">
        <dbReference type="Rhea" id="RHEA:27643"/>
    </physiologicalReaction>
</comment>
<comment type="catalytic activity">
    <reaction evidence="2">
        <text>S-methyl-5'-thioadenosine + phosphate = 5-(methylsulfanyl)-alpha-D-ribose 1-phosphate + adenine</text>
        <dbReference type="Rhea" id="RHEA:11852"/>
        <dbReference type="ChEBI" id="CHEBI:16708"/>
        <dbReference type="ChEBI" id="CHEBI:17509"/>
        <dbReference type="ChEBI" id="CHEBI:43474"/>
        <dbReference type="ChEBI" id="CHEBI:58533"/>
        <dbReference type="EC" id="2.4.2.28"/>
    </reaction>
    <physiologicalReaction direction="left-to-right" evidence="2">
        <dbReference type="Rhea" id="RHEA:11853"/>
    </physiologicalReaction>
</comment>
<comment type="catalytic activity">
    <reaction evidence="2">
        <text>inosine + phosphate = alpha-D-ribose 1-phosphate + hypoxanthine</text>
        <dbReference type="Rhea" id="RHEA:27646"/>
        <dbReference type="ChEBI" id="CHEBI:17368"/>
        <dbReference type="ChEBI" id="CHEBI:17596"/>
        <dbReference type="ChEBI" id="CHEBI:43474"/>
        <dbReference type="ChEBI" id="CHEBI:57720"/>
        <dbReference type="EC" id="2.4.2.1"/>
    </reaction>
    <physiologicalReaction direction="left-to-right" evidence="2">
        <dbReference type="Rhea" id="RHEA:27647"/>
    </physiologicalReaction>
</comment>
<comment type="catalytic activity">
    <reaction evidence="2">
        <text>adenosine + H2O + H(+) = inosine + NH4(+)</text>
        <dbReference type="Rhea" id="RHEA:24408"/>
        <dbReference type="ChEBI" id="CHEBI:15377"/>
        <dbReference type="ChEBI" id="CHEBI:15378"/>
        <dbReference type="ChEBI" id="CHEBI:16335"/>
        <dbReference type="ChEBI" id="CHEBI:17596"/>
        <dbReference type="ChEBI" id="CHEBI:28938"/>
        <dbReference type="EC" id="3.5.4.4"/>
    </reaction>
    <physiologicalReaction direction="left-to-right" evidence="2">
        <dbReference type="Rhea" id="RHEA:24409"/>
    </physiologicalReaction>
</comment>
<comment type="cofactor">
    <cofactor evidence="1">
        <name>Cu(2+)</name>
        <dbReference type="ChEBI" id="CHEBI:29036"/>
    </cofactor>
    <cofactor evidence="2">
        <name>Zn(2+)</name>
        <dbReference type="ChEBI" id="CHEBI:29105"/>
    </cofactor>
</comment>
<comment type="subunit">
    <text evidence="3">Homodimer.</text>
</comment>
<comment type="similarity">
    <text evidence="4">Belongs to the purine nucleoside phosphorylase YfiH/LACC1 family.</text>
</comment>
<feature type="chain" id="PRO_0000449801" description="Purine nucleoside phosphorylase BB_0467">
    <location>
        <begin position="1"/>
        <end position="229"/>
    </location>
</feature>
<feature type="binding site" evidence="2">
    <location>
        <position position="55"/>
    </location>
    <ligand>
        <name>Zn(2+)</name>
        <dbReference type="ChEBI" id="CHEBI:29105"/>
        <note>catalytic</note>
    </ligand>
</feature>
<feature type="binding site" evidence="2">
    <location>
        <position position="91"/>
    </location>
    <ligand>
        <name>Zn(2+)</name>
        <dbReference type="ChEBI" id="CHEBI:29105"/>
        <note>catalytic</note>
    </ligand>
</feature>
<feature type="binding site" evidence="2">
    <location>
        <position position="108"/>
    </location>
    <ligand>
        <name>Zn(2+)</name>
        <dbReference type="ChEBI" id="CHEBI:29105"/>
        <note>catalytic</note>
    </ligand>
</feature>
<accession>O51423</accession>
<protein>
    <recommendedName>
        <fullName>Purine nucleoside phosphorylase BB_0467</fullName>
        <ecNumber evidence="2">2.4.2.1</ecNumber>
    </recommendedName>
    <alternativeName>
        <fullName>Adenosine deaminase BB_0467</fullName>
        <ecNumber evidence="2">3.5.4.4</ecNumber>
    </alternativeName>
    <alternativeName>
        <fullName>S-methyl-5'-thioadenosine phosphorylase BB_0467</fullName>
        <ecNumber evidence="2">2.4.2.28</ecNumber>
    </alternativeName>
</protein>